<sequence length="55" mass="6424">MAKGARDKIKLESTAGTGHFYTTTKNKRNMPEKMLIKKFDPVVRKHVEYKETKIK</sequence>
<gene>
    <name evidence="1" type="primary">rpmG</name>
    <name type="ordered locus">Bphyt_3150</name>
</gene>
<organism>
    <name type="scientific">Paraburkholderia phytofirmans (strain DSM 17436 / LMG 22146 / PsJN)</name>
    <name type="common">Burkholderia phytofirmans</name>
    <dbReference type="NCBI Taxonomy" id="398527"/>
    <lineage>
        <taxon>Bacteria</taxon>
        <taxon>Pseudomonadati</taxon>
        <taxon>Pseudomonadota</taxon>
        <taxon>Betaproteobacteria</taxon>
        <taxon>Burkholderiales</taxon>
        <taxon>Burkholderiaceae</taxon>
        <taxon>Paraburkholderia</taxon>
    </lineage>
</organism>
<evidence type="ECO:0000255" key="1">
    <source>
        <dbReference type="HAMAP-Rule" id="MF_00294"/>
    </source>
</evidence>
<evidence type="ECO:0000305" key="2"/>
<comment type="similarity">
    <text evidence="1">Belongs to the bacterial ribosomal protein bL33 family.</text>
</comment>
<proteinExistence type="inferred from homology"/>
<keyword id="KW-0687">Ribonucleoprotein</keyword>
<keyword id="KW-0689">Ribosomal protein</keyword>
<dbReference type="EMBL" id="CP001052">
    <property type="protein sequence ID" value="ACD17542.1"/>
    <property type="molecule type" value="Genomic_DNA"/>
</dbReference>
<dbReference type="RefSeq" id="WP_007180630.1">
    <property type="nucleotide sequence ID" value="NC_010681.1"/>
</dbReference>
<dbReference type="SMR" id="B2T6H8"/>
<dbReference type="STRING" id="398527.Bphyt_3150"/>
<dbReference type="GeneID" id="97308177"/>
<dbReference type="KEGG" id="bpy:Bphyt_3150"/>
<dbReference type="eggNOG" id="COG0267">
    <property type="taxonomic scope" value="Bacteria"/>
</dbReference>
<dbReference type="HOGENOM" id="CLU_190949_1_1_4"/>
<dbReference type="OrthoDB" id="21586at2"/>
<dbReference type="Proteomes" id="UP000001739">
    <property type="component" value="Chromosome 1"/>
</dbReference>
<dbReference type="GO" id="GO:0022625">
    <property type="term" value="C:cytosolic large ribosomal subunit"/>
    <property type="evidence" value="ECO:0007669"/>
    <property type="project" value="TreeGrafter"/>
</dbReference>
<dbReference type="GO" id="GO:0003735">
    <property type="term" value="F:structural constituent of ribosome"/>
    <property type="evidence" value="ECO:0007669"/>
    <property type="project" value="InterPro"/>
</dbReference>
<dbReference type="GO" id="GO:0006412">
    <property type="term" value="P:translation"/>
    <property type="evidence" value="ECO:0007669"/>
    <property type="project" value="UniProtKB-UniRule"/>
</dbReference>
<dbReference type="FunFam" id="2.20.28.120:FF:000001">
    <property type="entry name" value="50S ribosomal protein L33"/>
    <property type="match status" value="1"/>
</dbReference>
<dbReference type="Gene3D" id="2.20.28.120">
    <property type="entry name" value="Ribosomal protein L33"/>
    <property type="match status" value="1"/>
</dbReference>
<dbReference type="HAMAP" id="MF_00294">
    <property type="entry name" value="Ribosomal_bL33"/>
    <property type="match status" value="1"/>
</dbReference>
<dbReference type="InterPro" id="IPR001705">
    <property type="entry name" value="Ribosomal_bL33"/>
</dbReference>
<dbReference type="InterPro" id="IPR038584">
    <property type="entry name" value="Ribosomal_bL33_sf"/>
</dbReference>
<dbReference type="InterPro" id="IPR011332">
    <property type="entry name" value="Ribosomal_zn-bd"/>
</dbReference>
<dbReference type="NCBIfam" id="NF001860">
    <property type="entry name" value="PRK00595.1"/>
    <property type="match status" value="1"/>
</dbReference>
<dbReference type="NCBIfam" id="TIGR01023">
    <property type="entry name" value="rpmG_bact"/>
    <property type="match status" value="1"/>
</dbReference>
<dbReference type="PANTHER" id="PTHR15238">
    <property type="entry name" value="54S RIBOSOMAL PROTEIN L39, MITOCHONDRIAL"/>
    <property type="match status" value="1"/>
</dbReference>
<dbReference type="PANTHER" id="PTHR15238:SF1">
    <property type="entry name" value="LARGE RIBOSOMAL SUBUNIT PROTEIN BL33M"/>
    <property type="match status" value="1"/>
</dbReference>
<dbReference type="Pfam" id="PF00471">
    <property type="entry name" value="Ribosomal_L33"/>
    <property type="match status" value="1"/>
</dbReference>
<dbReference type="SUPFAM" id="SSF57829">
    <property type="entry name" value="Zn-binding ribosomal proteins"/>
    <property type="match status" value="1"/>
</dbReference>
<protein>
    <recommendedName>
        <fullName evidence="1">Large ribosomal subunit protein bL33</fullName>
    </recommendedName>
    <alternativeName>
        <fullName evidence="2">50S ribosomal protein L33</fullName>
    </alternativeName>
</protein>
<reference key="1">
    <citation type="journal article" date="2011" name="J. Bacteriol.">
        <title>Complete genome sequence of the plant growth-promoting endophyte Burkholderia phytofirmans strain PsJN.</title>
        <authorList>
            <person name="Weilharter A."/>
            <person name="Mitter B."/>
            <person name="Shin M.V."/>
            <person name="Chain P.S."/>
            <person name="Nowak J."/>
            <person name="Sessitsch A."/>
        </authorList>
    </citation>
    <scope>NUCLEOTIDE SEQUENCE [LARGE SCALE GENOMIC DNA]</scope>
    <source>
        <strain>DSM 17436 / LMG 22146 / PsJN</strain>
    </source>
</reference>
<accession>B2T6H8</accession>
<name>RL33_PARPJ</name>
<feature type="chain" id="PRO_1000115116" description="Large ribosomal subunit protein bL33">
    <location>
        <begin position="1"/>
        <end position="55"/>
    </location>
</feature>